<comment type="function">
    <text evidence="1">Produces ATP from ADP in the presence of a proton gradient across the membrane. The catalytic sites are hosted primarily by the beta subunits.</text>
</comment>
<comment type="catalytic activity">
    <reaction evidence="1">
        <text>ATP + H2O + 4 H(+)(in) = ADP + phosphate + 5 H(+)(out)</text>
        <dbReference type="Rhea" id="RHEA:57720"/>
        <dbReference type="ChEBI" id="CHEBI:15377"/>
        <dbReference type="ChEBI" id="CHEBI:15378"/>
        <dbReference type="ChEBI" id="CHEBI:30616"/>
        <dbReference type="ChEBI" id="CHEBI:43474"/>
        <dbReference type="ChEBI" id="CHEBI:456216"/>
        <dbReference type="EC" id="7.1.2.2"/>
    </reaction>
</comment>
<comment type="subunit">
    <text evidence="1">F-type ATPases have 2 components, CF(1) - the catalytic core - and CF(0) - the membrane proton channel. CF(1) has five subunits: alpha(3), beta(3), gamma(1), delta(1), epsilon(1). CF(0) has three main subunits: a(1), b(2) and c(9-12). The alpha and beta chains form an alternating ring which encloses part of the gamma chain. CF(1) is attached to CF(0) by a central stalk formed by the gamma and epsilon chains, while a peripheral stalk is formed by the delta and b chains.</text>
</comment>
<comment type="subcellular location">
    <subcellularLocation>
        <location evidence="1">Cell inner membrane</location>
        <topology evidence="1">Peripheral membrane protein</topology>
    </subcellularLocation>
</comment>
<comment type="similarity">
    <text evidence="1">Belongs to the ATPase alpha/beta chains family.</text>
</comment>
<dbReference type="EC" id="7.1.2.2" evidence="1"/>
<dbReference type="EMBL" id="CU928145">
    <property type="protein sequence ID" value="CAV00818.1"/>
    <property type="molecule type" value="Genomic_DNA"/>
</dbReference>
<dbReference type="RefSeq" id="WP_000190506.1">
    <property type="nucleotide sequence ID" value="NZ_CP028304.1"/>
</dbReference>
<dbReference type="SMR" id="B7L882"/>
<dbReference type="GeneID" id="93778235"/>
<dbReference type="KEGG" id="eck:EC55989_4207"/>
<dbReference type="HOGENOM" id="CLU_022398_0_2_6"/>
<dbReference type="Proteomes" id="UP000000746">
    <property type="component" value="Chromosome"/>
</dbReference>
<dbReference type="GO" id="GO:0005886">
    <property type="term" value="C:plasma membrane"/>
    <property type="evidence" value="ECO:0007669"/>
    <property type="project" value="UniProtKB-SubCell"/>
</dbReference>
<dbReference type="GO" id="GO:0045259">
    <property type="term" value="C:proton-transporting ATP synthase complex"/>
    <property type="evidence" value="ECO:0007669"/>
    <property type="project" value="UniProtKB-KW"/>
</dbReference>
<dbReference type="GO" id="GO:0005524">
    <property type="term" value="F:ATP binding"/>
    <property type="evidence" value="ECO:0007669"/>
    <property type="project" value="UniProtKB-UniRule"/>
</dbReference>
<dbReference type="GO" id="GO:0016887">
    <property type="term" value="F:ATP hydrolysis activity"/>
    <property type="evidence" value="ECO:0007669"/>
    <property type="project" value="InterPro"/>
</dbReference>
<dbReference type="GO" id="GO:0046933">
    <property type="term" value="F:proton-transporting ATP synthase activity, rotational mechanism"/>
    <property type="evidence" value="ECO:0007669"/>
    <property type="project" value="UniProtKB-UniRule"/>
</dbReference>
<dbReference type="CDD" id="cd18110">
    <property type="entry name" value="ATP-synt_F1_beta_C"/>
    <property type="match status" value="1"/>
</dbReference>
<dbReference type="CDD" id="cd18115">
    <property type="entry name" value="ATP-synt_F1_beta_N"/>
    <property type="match status" value="1"/>
</dbReference>
<dbReference type="CDD" id="cd01133">
    <property type="entry name" value="F1-ATPase_beta_CD"/>
    <property type="match status" value="1"/>
</dbReference>
<dbReference type="FunFam" id="1.10.1140.10:FF:000001">
    <property type="entry name" value="ATP synthase subunit beta"/>
    <property type="match status" value="1"/>
</dbReference>
<dbReference type="FunFam" id="2.40.10.170:FF:000003">
    <property type="entry name" value="ATP synthase subunit beta"/>
    <property type="match status" value="1"/>
</dbReference>
<dbReference type="FunFam" id="3.40.50.300:FF:000004">
    <property type="entry name" value="ATP synthase subunit beta"/>
    <property type="match status" value="1"/>
</dbReference>
<dbReference type="Gene3D" id="2.40.10.170">
    <property type="match status" value="1"/>
</dbReference>
<dbReference type="Gene3D" id="1.10.1140.10">
    <property type="entry name" value="Bovine Mitochondrial F1-atpase, Atp Synthase Beta Chain, Chain D, domain 3"/>
    <property type="match status" value="1"/>
</dbReference>
<dbReference type="Gene3D" id="3.40.50.300">
    <property type="entry name" value="P-loop containing nucleotide triphosphate hydrolases"/>
    <property type="match status" value="1"/>
</dbReference>
<dbReference type="HAMAP" id="MF_01347">
    <property type="entry name" value="ATP_synth_beta_bact"/>
    <property type="match status" value="1"/>
</dbReference>
<dbReference type="InterPro" id="IPR003593">
    <property type="entry name" value="AAA+_ATPase"/>
</dbReference>
<dbReference type="InterPro" id="IPR055190">
    <property type="entry name" value="ATP-synt_VA_C"/>
</dbReference>
<dbReference type="InterPro" id="IPR005722">
    <property type="entry name" value="ATP_synth_F1_bsu"/>
</dbReference>
<dbReference type="InterPro" id="IPR020003">
    <property type="entry name" value="ATPase_a/bsu_AS"/>
</dbReference>
<dbReference type="InterPro" id="IPR050053">
    <property type="entry name" value="ATPase_alpha/beta_chains"/>
</dbReference>
<dbReference type="InterPro" id="IPR004100">
    <property type="entry name" value="ATPase_F1/V1/A1_a/bsu_N"/>
</dbReference>
<dbReference type="InterPro" id="IPR036121">
    <property type="entry name" value="ATPase_F1/V1/A1_a/bsu_N_sf"/>
</dbReference>
<dbReference type="InterPro" id="IPR000194">
    <property type="entry name" value="ATPase_F1/V1/A1_a/bsu_nucl-bd"/>
</dbReference>
<dbReference type="InterPro" id="IPR024034">
    <property type="entry name" value="ATPase_F1/V1_b/a_C"/>
</dbReference>
<dbReference type="InterPro" id="IPR027417">
    <property type="entry name" value="P-loop_NTPase"/>
</dbReference>
<dbReference type="NCBIfam" id="TIGR01039">
    <property type="entry name" value="atpD"/>
    <property type="match status" value="1"/>
</dbReference>
<dbReference type="PANTHER" id="PTHR15184">
    <property type="entry name" value="ATP SYNTHASE"/>
    <property type="match status" value="1"/>
</dbReference>
<dbReference type="PANTHER" id="PTHR15184:SF71">
    <property type="entry name" value="ATP SYNTHASE SUBUNIT BETA, MITOCHONDRIAL"/>
    <property type="match status" value="1"/>
</dbReference>
<dbReference type="Pfam" id="PF00006">
    <property type="entry name" value="ATP-synt_ab"/>
    <property type="match status" value="1"/>
</dbReference>
<dbReference type="Pfam" id="PF02874">
    <property type="entry name" value="ATP-synt_ab_N"/>
    <property type="match status" value="1"/>
</dbReference>
<dbReference type="Pfam" id="PF22919">
    <property type="entry name" value="ATP-synt_VA_C"/>
    <property type="match status" value="1"/>
</dbReference>
<dbReference type="SMART" id="SM00382">
    <property type="entry name" value="AAA"/>
    <property type="match status" value="1"/>
</dbReference>
<dbReference type="SUPFAM" id="SSF47917">
    <property type="entry name" value="C-terminal domain of alpha and beta subunits of F1 ATP synthase"/>
    <property type="match status" value="1"/>
</dbReference>
<dbReference type="SUPFAM" id="SSF50615">
    <property type="entry name" value="N-terminal domain of alpha and beta subunits of F1 ATP synthase"/>
    <property type="match status" value="1"/>
</dbReference>
<dbReference type="SUPFAM" id="SSF52540">
    <property type="entry name" value="P-loop containing nucleoside triphosphate hydrolases"/>
    <property type="match status" value="1"/>
</dbReference>
<dbReference type="PROSITE" id="PS00152">
    <property type="entry name" value="ATPASE_ALPHA_BETA"/>
    <property type="match status" value="1"/>
</dbReference>
<proteinExistence type="inferred from homology"/>
<name>ATPB_ECO55</name>
<keyword id="KW-0066">ATP synthesis</keyword>
<keyword id="KW-0067">ATP-binding</keyword>
<keyword id="KW-0997">Cell inner membrane</keyword>
<keyword id="KW-1003">Cell membrane</keyword>
<keyword id="KW-0139">CF(1)</keyword>
<keyword id="KW-0375">Hydrogen ion transport</keyword>
<keyword id="KW-0406">Ion transport</keyword>
<keyword id="KW-0472">Membrane</keyword>
<keyword id="KW-0547">Nucleotide-binding</keyword>
<keyword id="KW-1185">Reference proteome</keyword>
<keyword id="KW-1278">Translocase</keyword>
<keyword id="KW-0813">Transport</keyword>
<accession>B7L882</accession>
<protein>
    <recommendedName>
        <fullName evidence="1">ATP synthase subunit beta</fullName>
        <ecNumber evidence="1">7.1.2.2</ecNumber>
    </recommendedName>
    <alternativeName>
        <fullName evidence="1">ATP synthase F1 sector subunit beta</fullName>
    </alternativeName>
    <alternativeName>
        <fullName evidence="1">F-ATPase subunit beta</fullName>
    </alternativeName>
</protein>
<sequence length="460" mass="50325">MATGKIVQVIGAVVDVEFPQDAVPRVYDALEVQNGNERLVLEVQQQLGGGIVRTIAMGSSDGLRRGLDVKDLEHPIEVPVGKATLGRIMNVLGEPVDMKGEIGEEERWAIHRAAPSYEELSNSQELLETGIKVIDLMCPFAKGGKVGLFGGAGVGKTVNMMELIRNIAIEHSGYSVFAGVGERTREGNDFYHEMTDSNVIDKVSLVYGQMNEPPGNRLRVALTGLTMAEKFRDEGRDVLLFVDNIYRYTLAGTEVSALLGRMPSAVGYQPTLAEEMGVLQERITSTKTGSITSVQAVYVPADDLTDPSPATTFAHLDATVVLSRQIASLGIYPAVDPLDSTSRQLDPLVVGQEHYDTARGVQSILQRYQELKDIIAILGMDELSEEDKLVVARARKIQRFLSQPFFVAEVFTGSPGKYVSLKDTIRGFKGIMEGEYDHLPEQAFYMVGSIEEAVEKAKKL</sequence>
<organism>
    <name type="scientific">Escherichia coli (strain 55989 / EAEC)</name>
    <dbReference type="NCBI Taxonomy" id="585055"/>
    <lineage>
        <taxon>Bacteria</taxon>
        <taxon>Pseudomonadati</taxon>
        <taxon>Pseudomonadota</taxon>
        <taxon>Gammaproteobacteria</taxon>
        <taxon>Enterobacterales</taxon>
        <taxon>Enterobacteriaceae</taxon>
        <taxon>Escherichia</taxon>
    </lineage>
</organism>
<evidence type="ECO:0000255" key="1">
    <source>
        <dbReference type="HAMAP-Rule" id="MF_01347"/>
    </source>
</evidence>
<reference key="1">
    <citation type="journal article" date="2009" name="PLoS Genet.">
        <title>Organised genome dynamics in the Escherichia coli species results in highly diverse adaptive paths.</title>
        <authorList>
            <person name="Touchon M."/>
            <person name="Hoede C."/>
            <person name="Tenaillon O."/>
            <person name="Barbe V."/>
            <person name="Baeriswyl S."/>
            <person name="Bidet P."/>
            <person name="Bingen E."/>
            <person name="Bonacorsi S."/>
            <person name="Bouchier C."/>
            <person name="Bouvet O."/>
            <person name="Calteau A."/>
            <person name="Chiapello H."/>
            <person name="Clermont O."/>
            <person name="Cruveiller S."/>
            <person name="Danchin A."/>
            <person name="Diard M."/>
            <person name="Dossat C."/>
            <person name="Karoui M.E."/>
            <person name="Frapy E."/>
            <person name="Garry L."/>
            <person name="Ghigo J.M."/>
            <person name="Gilles A.M."/>
            <person name="Johnson J."/>
            <person name="Le Bouguenec C."/>
            <person name="Lescat M."/>
            <person name="Mangenot S."/>
            <person name="Martinez-Jehanne V."/>
            <person name="Matic I."/>
            <person name="Nassif X."/>
            <person name="Oztas S."/>
            <person name="Petit M.A."/>
            <person name="Pichon C."/>
            <person name="Rouy Z."/>
            <person name="Ruf C.S."/>
            <person name="Schneider D."/>
            <person name="Tourret J."/>
            <person name="Vacherie B."/>
            <person name="Vallenet D."/>
            <person name="Medigue C."/>
            <person name="Rocha E.P.C."/>
            <person name="Denamur E."/>
        </authorList>
    </citation>
    <scope>NUCLEOTIDE SEQUENCE [LARGE SCALE GENOMIC DNA]</scope>
    <source>
        <strain>55989 / EAEC</strain>
    </source>
</reference>
<gene>
    <name evidence="1" type="primary">atpD</name>
    <name type="ordered locus">EC55989_4207</name>
</gene>
<feature type="chain" id="PRO_1000166590" description="ATP synthase subunit beta">
    <location>
        <begin position="1"/>
        <end position="460"/>
    </location>
</feature>
<feature type="binding site" evidence="1">
    <location>
        <begin position="150"/>
        <end position="157"/>
    </location>
    <ligand>
        <name>ATP</name>
        <dbReference type="ChEBI" id="CHEBI:30616"/>
    </ligand>
</feature>